<proteinExistence type="inferred from homology"/>
<organism>
    <name type="scientific">Methanoculleus marisnigri (strain ATCC 35101 / DSM 1498 / JR1)</name>
    <dbReference type="NCBI Taxonomy" id="368407"/>
    <lineage>
        <taxon>Archaea</taxon>
        <taxon>Methanobacteriati</taxon>
        <taxon>Methanobacteriota</taxon>
        <taxon>Stenosarchaea group</taxon>
        <taxon>Methanomicrobia</taxon>
        <taxon>Methanomicrobiales</taxon>
        <taxon>Methanomicrobiaceae</taxon>
        <taxon>Methanoculleus</taxon>
    </lineage>
</organism>
<protein>
    <recommendedName>
        <fullName evidence="1">Digeranylgeranylglycerophospholipid reductase</fullName>
        <shortName evidence="1">DGGGPL reductase</shortName>
        <ecNumber evidence="1">1.3.7.11</ecNumber>
    </recommendedName>
    <alternativeName>
        <fullName evidence="1">2,3-bis-O-geranylgeranylglyceryl phosphate reductase</fullName>
    </alternativeName>
    <alternativeName>
        <fullName evidence="1">Geranylgeranyl reductase</fullName>
        <shortName evidence="1">GGR</shortName>
    </alternativeName>
</protein>
<feature type="chain" id="PRO_5000223853" description="Digeranylgeranylglycerophospholipid reductase">
    <location>
        <begin position="1"/>
        <end position="398"/>
    </location>
</feature>
<feature type="binding site" evidence="1">
    <location>
        <position position="15"/>
    </location>
    <ligand>
        <name>FAD</name>
        <dbReference type="ChEBI" id="CHEBI:57692"/>
    </ligand>
</feature>
<feature type="binding site" evidence="1">
    <location>
        <position position="34"/>
    </location>
    <ligand>
        <name>FAD</name>
        <dbReference type="ChEBI" id="CHEBI:57692"/>
    </ligand>
</feature>
<feature type="binding site" evidence="1">
    <location>
        <position position="45"/>
    </location>
    <ligand>
        <name>FAD</name>
        <dbReference type="ChEBI" id="CHEBI:57692"/>
    </ligand>
</feature>
<feature type="binding site" evidence="1">
    <location>
        <position position="46"/>
    </location>
    <ligand>
        <name>FAD</name>
        <dbReference type="ChEBI" id="CHEBI:57692"/>
    </ligand>
</feature>
<feature type="binding site" evidence="1">
    <location>
        <position position="48"/>
    </location>
    <ligand>
        <name>FAD</name>
        <dbReference type="ChEBI" id="CHEBI:57692"/>
    </ligand>
</feature>
<feature type="binding site" evidence="1">
    <location>
        <position position="99"/>
    </location>
    <ligand>
        <name>FAD</name>
        <dbReference type="ChEBI" id="CHEBI:57692"/>
    </ligand>
</feature>
<feature type="binding site" evidence="1">
    <location>
        <position position="123"/>
    </location>
    <ligand>
        <name>FAD</name>
        <dbReference type="ChEBI" id="CHEBI:57692"/>
    </ligand>
</feature>
<feature type="binding site" evidence="1">
    <location>
        <position position="280"/>
    </location>
    <ligand>
        <name>FAD</name>
        <dbReference type="ChEBI" id="CHEBI:57692"/>
    </ligand>
</feature>
<feature type="binding site" evidence="1">
    <location>
        <position position="292"/>
    </location>
    <ligand>
        <name>FAD</name>
        <dbReference type="ChEBI" id="CHEBI:57692"/>
    </ligand>
</feature>
<feature type="binding site" evidence="1">
    <location>
        <position position="293"/>
    </location>
    <ligand>
        <name>FAD</name>
        <dbReference type="ChEBI" id="CHEBI:57692"/>
    </ligand>
</feature>
<feature type="binding site" evidence="1">
    <location>
        <position position="372"/>
    </location>
    <ligand>
        <name>a 2,3-bis-O-(geranylgeranyl)-sn-glycerol 1-phospholipid</name>
        <dbReference type="ChEBI" id="CHEBI:138140"/>
    </ligand>
</feature>
<reference key="1">
    <citation type="journal article" date="2009" name="Stand. Genomic Sci.">
        <title>Complete genome sequence of Methanoculleus marisnigri Romesser et al. 1981 type strain JR1.</title>
        <authorList>
            <person name="Anderson I.J."/>
            <person name="Sieprawska-Lupa M."/>
            <person name="Lapidus A."/>
            <person name="Nolan M."/>
            <person name="Copeland A."/>
            <person name="Glavina Del Rio T."/>
            <person name="Tice H."/>
            <person name="Dalin E."/>
            <person name="Barry K."/>
            <person name="Saunders E."/>
            <person name="Han C."/>
            <person name="Brettin T."/>
            <person name="Detter J.C."/>
            <person name="Bruce D."/>
            <person name="Mikhailova N."/>
            <person name="Pitluck S."/>
            <person name="Hauser L."/>
            <person name="Land M."/>
            <person name="Lucas S."/>
            <person name="Richardson P."/>
            <person name="Whitman W.B."/>
            <person name="Kyrpides N.C."/>
        </authorList>
    </citation>
    <scope>NUCLEOTIDE SEQUENCE [LARGE SCALE GENOMIC DNA]</scope>
    <source>
        <strain>ATCC 35101 / DSM 1498 / JR1</strain>
    </source>
</reference>
<evidence type="ECO:0000255" key="1">
    <source>
        <dbReference type="HAMAP-Rule" id="MF_01287"/>
    </source>
</evidence>
<name>GGR_METMJ</name>
<gene>
    <name type="ordered locus">Memar_0506</name>
</gene>
<dbReference type="EC" id="1.3.7.11" evidence="1"/>
<dbReference type="EMBL" id="CP000562">
    <property type="protein sequence ID" value="ABN56439.1"/>
    <property type="molecule type" value="Genomic_DNA"/>
</dbReference>
<dbReference type="RefSeq" id="WP_011843349.1">
    <property type="nucleotide sequence ID" value="NC_009051.1"/>
</dbReference>
<dbReference type="SMR" id="A3CST9"/>
<dbReference type="STRING" id="368407.Memar_0506"/>
<dbReference type="GeneID" id="4847752"/>
<dbReference type="KEGG" id="mem:Memar_0506"/>
<dbReference type="eggNOG" id="arCOG00570">
    <property type="taxonomic scope" value="Archaea"/>
</dbReference>
<dbReference type="HOGENOM" id="CLU_024648_0_0_2"/>
<dbReference type="OrthoDB" id="6062at2157"/>
<dbReference type="UniPathway" id="UPA00940"/>
<dbReference type="Proteomes" id="UP000002146">
    <property type="component" value="Chromosome"/>
</dbReference>
<dbReference type="GO" id="GO:0016020">
    <property type="term" value="C:membrane"/>
    <property type="evidence" value="ECO:0007669"/>
    <property type="project" value="GOC"/>
</dbReference>
<dbReference type="GO" id="GO:0050660">
    <property type="term" value="F:flavin adenine dinucleotide binding"/>
    <property type="evidence" value="ECO:0007669"/>
    <property type="project" value="UniProtKB-UniRule"/>
</dbReference>
<dbReference type="GO" id="GO:0045550">
    <property type="term" value="F:geranylgeranyl reductase activity"/>
    <property type="evidence" value="ECO:0007669"/>
    <property type="project" value="InterPro"/>
</dbReference>
<dbReference type="GO" id="GO:0016636">
    <property type="term" value="F:oxidoreductase activity, acting on the CH-CH group of donors, iron-sulfur protein as acceptor"/>
    <property type="evidence" value="ECO:0007669"/>
    <property type="project" value="UniProtKB-UniRule"/>
</dbReference>
<dbReference type="GO" id="GO:0016628">
    <property type="term" value="F:oxidoreductase activity, acting on the CH-CH group of donors, NAD or NADP as acceptor"/>
    <property type="evidence" value="ECO:0007669"/>
    <property type="project" value="InterPro"/>
</dbReference>
<dbReference type="GO" id="GO:0046474">
    <property type="term" value="P:glycerophospholipid biosynthetic process"/>
    <property type="evidence" value="ECO:0007669"/>
    <property type="project" value="UniProtKB-UniRule"/>
</dbReference>
<dbReference type="GO" id="GO:0046467">
    <property type="term" value="P:membrane lipid biosynthetic process"/>
    <property type="evidence" value="ECO:0007669"/>
    <property type="project" value="InterPro"/>
</dbReference>
<dbReference type="Gene3D" id="3.30.9.10">
    <property type="entry name" value="D-Amino Acid Oxidase, subunit A, domain 2"/>
    <property type="match status" value="1"/>
</dbReference>
<dbReference type="Gene3D" id="3.50.50.60">
    <property type="entry name" value="FAD/NAD(P)-binding domain"/>
    <property type="match status" value="1"/>
</dbReference>
<dbReference type="HAMAP" id="MF_01287">
    <property type="entry name" value="DGGGPL_reductase"/>
    <property type="match status" value="1"/>
</dbReference>
<dbReference type="InterPro" id="IPR023590">
    <property type="entry name" value="DGGGPL_reductase"/>
</dbReference>
<dbReference type="InterPro" id="IPR036188">
    <property type="entry name" value="FAD/NAD-bd_sf"/>
</dbReference>
<dbReference type="InterPro" id="IPR011777">
    <property type="entry name" value="Geranylgeranyl_Rdtase_fam"/>
</dbReference>
<dbReference type="InterPro" id="IPR050407">
    <property type="entry name" value="Geranylgeranyl_reductase"/>
</dbReference>
<dbReference type="InterPro" id="IPR054715">
    <property type="entry name" value="GGR_cat"/>
</dbReference>
<dbReference type="NCBIfam" id="TIGR02032">
    <property type="entry name" value="GG-red-SF"/>
    <property type="match status" value="1"/>
</dbReference>
<dbReference type="PANTHER" id="PTHR42685:SF18">
    <property type="entry name" value="DIGERANYLGERANYLGLYCEROPHOSPHOLIPID REDUCTASE"/>
    <property type="match status" value="1"/>
</dbReference>
<dbReference type="PANTHER" id="PTHR42685">
    <property type="entry name" value="GERANYLGERANYL DIPHOSPHATE REDUCTASE"/>
    <property type="match status" value="1"/>
</dbReference>
<dbReference type="Pfam" id="PF12831">
    <property type="entry name" value="FAD_oxidored"/>
    <property type="match status" value="1"/>
</dbReference>
<dbReference type="Pfam" id="PF22578">
    <property type="entry name" value="GGR_cat"/>
    <property type="match status" value="1"/>
</dbReference>
<dbReference type="PRINTS" id="PR00420">
    <property type="entry name" value="RNGMNOXGNASE"/>
</dbReference>
<dbReference type="SUPFAM" id="SSF51905">
    <property type="entry name" value="FAD/NAD(P)-binding domain"/>
    <property type="match status" value="1"/>
</dbReference>
<accession>A3CST9</accession>
<keyword id="KW-0274">FAD</keyword>
<keyword id="KW-0285">Flavoprotein</keyword>
<keyword id="KW-0444">Lipid biosynthesis</keyword>
<keyword id="KW-0443">Lipid metabolism</keyword>
<keyword id="KW-0560">Oxidoreductase</keyword>
<keyword id="KW-0594">Phospholipid biosynthesis</keyword>
<keyword id="KW-1208">Phospholipid metabolism</keyword>
<comment type="function">
    <text evidence="1">Is involved in the reduction of 2,3-digeranylgeranylglycerophospholipids (unsaturated archaeols) into 2,3-diphytanylglycerophospholipids (saturated archaeols) in the biosynthesis of archaeal membrane lipids. Catalyzes the formation of archaetidic acid (2,3-di-O-phytanyl-sn-glyceryl phosphate) from 2,3-di-O-geranylgeranylglyceryl phosphate (DGGGP) via the hydrogenation of each double bond of the isoprenoid chains. Is also probably able to reduce double bonds of geranyl groups in CDP-2,3-bis-O-(geranylgeranyl)-sn-glycerol and archaetidylserine, thus acting at various stages in the biosynthesis of archaeal membrane lipids.</text>
</comment>
<comment type="catalytic activity">
    <reaction evidence="1">
        <text>a 2,3-bis-O-phytanyl-sn-glycerol 1-phospholipid + 8 oxidized 2[4Fe-4S]-[ferredoxin] = a 2,3-bis-O-(geranylgeranyl)-sn-glycerol 1-phospholipid + 8 reduced 2[4Fe-4S]-[ferredoxin] + 16 H(+)</text>
        <dbReference type="Rhea" id="RHEA:54324"/>
        <dbReference type="Rhea" id="RHEA-COMP:10002"/>
        <dbReference type="Rhea" id="RHEA-COMP:10004"/>
        <dbReference type="ChEBI" id="CHEBI:15378"/>
        <dbReference type="ChEBI" id="CHEBI:33722"/>
        <dbReference type="ChEBI" id="CHEBI:33723"/>
        <dbReference type="ChEBI" id="CHEBI:138139"/>
        <dbReference type="ChEBI" id="CHEBI:138140"/>
        <dbReference type="EC" id="1.3.7.11"/>
    </reaction>
    <physiologicalReaction direction="right-to-left" evidence="1">
        <dbReference type="Rhea" id="RHEA:54326"/>
    </physiologicalReaction>
</comment>
<comment type="catalytic activity">
    <reaction evidence="1">
        <text>2,3-bis-O-(phytanyl)-sn-glycerol 1-phosphate + 8 oxidized 2[4Fe-4S]-[ferredoxin] = 2,3-bis-O-(geranylgeranyl)-sn-glycerol 1-phosphate + 8 reduced 2[4Fe-4S]-[ferredoxin] + 16 H(+)</text>
        <dbReference type="Rhea" id="RHEA:36159"/>
        <dbReference type="Rhea" id="RHEA-COMP:10002"/>
        <dbReference type="Rhea" id="RHEA-COMP:10004"/>
        <dbReference type="ChEBI" id="CHEBI:15378"/>
        <dbReference type="ChEBI" id="CHEBI:33722"/>
        <dbReference type="ChEBI" id="CHEBI:33723"/>
        <dbReference type="ChEBI" id="CHEBI:58837"/>
        <dbReference type="ChEBI" id="CHEBI:73125"/>
        <dbReference type="EC" id="1.3.7.11"/>
    </reaction>
    <physiologicalReaction direction="right-to-left" evidence="1">
        <dbReference type="Rhea" id="RHEA:36161"/>
    </physiologicalReaction>
</comment>
<comment type="catalytic activity">
    <reaction evidence="1">
        <text>a 2,3-bis-O-phytanyl-sn-glycerol 1-phospholipid + 8 A = a 2,3-bis-O-(geranylgeranyl)-sn-glycerol 1-phospholipid + 8 AH2</text>
        <dbReference type="Rhea" id="RHEA:64376"/>
        <dbReference type="ChEBI" id="CHEBI:13193"/>
        <dbReference type="ChEBI" id="CHEBI:17499"/>
        <dbReference type="ChEBI" id="CHEBI:138139"/>
        <dbReference type="ChEBI" id="CHEBI:138140"/>
    </reaction>
    <physiologicalReaction direction="right-to-left" evidence="1">
        <dbReference type="Rhea" id="RHEA:64378"/>
    </physiologicalReaction>
</comment>
<comment type="catalytic activity">
    <reaction evidence="1">
        <text>CDP-2,3-bis-O-(geranylgeranyl)-sn-glycerol + 8 AH2 = CDP-2,3-bis-O-(phytanyl)-sn-glycerol + 8 A</text>
        <dbReference type="Rhea" id="RHEA:84207"/>
        <dbReference type="ChEBI" id="CHEBI:13193"/>
        <dbReference type="ChEBI" id="CHEBI:17499"/>
        <dbReference type="ChEBI" id="CHEBI:58838"/>
        <dbReference type="ChEBI" id="CHEBI:74004"/>
    </reaction>
    <physiologicalReaction direction="left-to-right" evidence="1">
        <dbReference type="Rhea" id="RHEA:84208"/>
    </physiologicalReaction>
</comment>
<comment type="catalytic activity">
    <reaction evidence="1">
        <text>archaetidylserine + 8 AH2 = 2,3-bis-O-phytanyl-sn-glycero-3-phospho-L-serine + 8 A</text>
        <dbReference type="Rhea" id="RHEA:84215"/>
        <dbReference type="ChEBI" id="CHEBI:13193"/>
        <dbReference type="ChEBI" id="CHEBI:17499"/>
        <dbReference type="ChEBI" id="CHEBI:71517"/>
        <dbReference type="ChEBI" id="CHEBI:74853"/>
    </reaction>
    <physiologicalReaction direction="left-to-right" evidence="1">
        <dbReference type="Rhea" id="RHEA:84216"/>
    </physiologicalReaction>
</comment>
<comment type="cofactor">
    <cofactor evidence="1">
        <name>FAD</name>
        <dbReference type="ChEBI" id="CHEBI:57692"/>
    </cofactor>
    <text evidence="1">Binds 1 FAD per subunit.</text>
</comment>
<comment type="pathway">
    <text evidence="1">Membrane lipid metabolism; glycerophospholipid metabolism.</text>
</comment>
<comment type="miscellaneous">
    <text evidence="1">Reduction reaction proceeds via syn addition of hydrogen for double bonds.</text>
</comment>
<comment type="similarity">
    <text evidence="1">Belongs to the geranylgeranyl reductase family. DGGGPL reductase subfamily.</text>
</comment>
<sequence length="398" mass="42479">MKNNYDILIIGGGPAGALAAKTAAEAGNTVCLIEKRAAIGTPVRCAEGIGKELLKEFIKPDPRWIAADIERARIISPNGTAISLEQDRAGNEVGYVLDRKIFDRELVWQAAEAGADVIVKTRATAPIMENGAVRGAKVLSVGIPADIRAEVVIAADGTEAQFARRAGLDTVVPLREMMSCAQYLMTDIDIDAGSTDFYLGNEIAPEGYLWVFPKGNRTANVGIGISGRKSRDGSRAKDYLDRFVAKNFPNGKTIEAIAGGVPVCRPLACTVADGLMVAGDAARVVDPITGGGIGNAMYTGRLAAQVASKCIAAGDCSKEALMPYDAEWRASKMGTVLERNYKVKEYFVTLDDAKLNTLAESIAQSSLKEFSVLGLIKELIKRNPKLLLELKALKDTLS</sequence>